<name>KDPC_PSEPK</name>
<organism>
    <name type="scientific">Pseudomonas putida (strain ATCC 47054 / DSM 6125 / CFBP 8728 / NCIMB 11950 / KT2440)</name>
    <dbReference type="NCBI Taxonomy" id="160488"/>
    <lineage>
        <taxon>Bacteria</taxon>
        <taxon>Pseudomonadati</taxon>
        <taxon>Pseudomonadota</taxon>
        <taxon>Gammaproteobacteria</taxon>
        <taxon>Pseudomonadales</taxon>
        <taxon>Pseudomonadaceae</taxon>
        <taxon>Pseudomonas</taxon>
    </lineage>
</organism>
<proteinExistence type="inferred from homology"/>
<dbReference type="EMBL" id="AE015451">
    <property type="protein sequence ID" value="AAN69741.1"/>
    <property type="molecule type" value="Genomic_DNA"/>
</dbReference>
<dbReference type="RefSeq" id="NP_746277.1">
    <property type="nucleotide sequence ID" value="NC_002947.4"/>
</dbReference>
<dbReference type="RefSeq" id="WP_003251480.1">
    <property type="nucleotide sequence ID" value="NZ_CP169744.1"/>
</dbReference>
<dbReference type="SMR" id="Q88FD8"/>
<dbReference type="STRING" id="160488.PP_4159"/>
<dbReference type="PaxDb" id="160488-PP_4159"/>
<dbReference type="GeneID" id="83679152"/>
<dbReference type="KEGG" id="ppu:PP_4159"/>
<dbReference type="PATRIC" id="fig|160488.4.peg.4420"/>
<dbReference type="eggNOG" id="COG2156">
    <property type="taxonomic scope" value="Bacteria"/>
</dbReference>
<dbReference type="HOGENOM" id="CLU_077094_2_0_6"/>
<dbReference type="OrthoDB" id="9788285at2"/>
<dbReference type="PhylomeDB" id="Q88FD8"/>
<dbReference type="BioCyc" id="PPUT160488:G1G01-4425-MONOMER"/>
<dbReference type="Proteomes" id="UP000000556">
    <property type="component" value="Chromosome"/>
</dbReference>
<dbReference type="GO" id="GO:0005886">
    <property type="term" value="C:plasma membrane"/>
    <property type="evidence" value="ECO:0007669"/>
    <property type="project" value="UniProtKB-SubCell"/>
</dbReference>
<dbReference type="GO" id="GO:0005524">
    <property type="term" value="F:ATP binding"/>
    <property type="evidence" value="ECO:0007669"/>
    <property type="project" value="UniProtKB-UniRule"/>
</dbReference>
<dbReference type="GO" id="GO:0008556">
    <property type="term" value="F:P-type potassium transmembrane transporter activity"/>
    <property type="evidence" value="ECO:0007669"/>
    <property type="project" value="InterPro"/>
</dbReference>
<dbReference type="HAMAP" id="MF_00276">
    <property type="entry name" value="KdpC"/>
    <property type="match status" value="1"/>
</dbReference>
<dbReference type="InterPro" id="IPR003820">
    <property type="entry name" value="KdpC"/>
</dbReference>
<dbReference type="NCBIfam" id="TIGR00681">
    <property type="entry name" value="kdpC"/>
    <property type="match status" value="1"/>
</dbReference>
<dbReference type="NCBIfam" id="NF001454">
    <property type="entry name" value="PRK00315.1"/>
    <property type="match status" value="1"/>
</dbReference>
<dbReference type="PANTHER" id="PTHR30042">
    <property type="entry name" value="POTASSIUM-TRANSPORTING ATPASE C CHAIN"/>
    <property type="match status" value="1"/>
</dbReference>
<dbReference type="PANTHER" id="PTHR30042:SF2">
    <property type="entry name" value="POTASSIUM-TRANSPORTING ATPASE KDPC SUBUNIT"/>
    <property type="match status" value="1"/>
</dbReference>
<dbReference type="Pfam" id="PF02669">
    <property type="entry name" value="KdpC"/>
    <property type="match status" value="1"/>
</dbReference>
<dbReference type="PIRSF" id="PIRSF001296">
    <property type="entry name" value="K_ATPase_KdpC"/>
    <property type="match status" value="1"/>
</dbReference>
<protein>
    <recommendedName>
        <fullName evidence="1">Potassium-transporting ATPase KdpC subunit</fullName>
    </recommendedName>
    <alternativeName>
        <fullName evidence="1">ATP phosphohydrolase [potassium-transporting] C chain</fullName>
    </alternativeName>
    <alternativeName>
        <fullName evidence="1">Potassium-binding and translocating subunit C</fullName>
    </alternativeName>
    <alternativeName>
        <fullName evidence="1">Potassium-translocating ATPase C chain</fullName>
    </alternativeName>
</protein>
<gene>
    <name evidence="1" type="primary">kdpC</name>
    <name type="ordered locus">PP_4159</name>
</gene>
<feature type="chain" id="PRO_0000197002" description="Potassium-transporting ATPase KdpC subunit">
    <location>
        <begin position="1"/>
        <end position="185"/>
    </location>
</feature>
<feature type="transmembrane region" description="Helical" evidence="1">
    <location>
        <begin position="11"/>
        <end position="31"/>
    </location>
</feature>
<sequence length="185" mass="19242">MTAYLRPALSLALLMTLVTGALYPLAVTGIAQVAFPNQANGSLVRDAQGQVRGSALIAQDFQGDGWFHSRPSAGAYATVASGASNLSPSNPALAERVKGDAATLYQAQQGPVPQALLTTSGSGLDPHLPPEALAYQIPRVAAARQLPVERLQALLEQATLHPLIGPPVVNVLALNQALEKLAIVR</sequence>
<reference key="1">
    <citation type="journal article" date="2002" name="Environ. Microbiol.">
        <title>Complete genome sequence and comparative analysis of the metabolically versatile Pseudomonas putida KT2440.</title>
        <authorList>
            <person name="Nelson K.E."/>
            <person name="Weinel C."/>
            <person name="Paulsen I.T."/>
            <person name="Dodson R.J."/>
            <person name="Hilbert H."/>
            <person name="Martins dos Santos V.A.P."/>
            <person name="Fouts D.E."/>
            <person name="Gill S.R."/>
            <person name="Pop M."/>
            <person name="Holmes M."/>
            <person name="Brinkac L.M."/>
            <person name="Beanan M.J."/>
            <person name="DeBoy R.T."/>
            <person name="Daugherty S.C."/>
            <person name="Kolonay J.F."/>
            <person name="Madupu R."/>
            <person name="Nelson W.C."/>
            <person name="White O."/>
            <person name="Peterson J.D."/>
            <person name="Khouri H.M."/>
            <person name="Hance I."/>
            <person name="Chris Lee P."/>
            <person name="Holtzapple E.K."/>
            <person name="Scanlan D."/>
            <person name="Tran K."/>
            <person name="Moazzez A."/>
            <person name="Utterback T.R."/>
            <person name="Rizzo M."/>
            <person name="Lee K."/>
            <person name="Kosack D."/>
            <person name="Moestl D."/>
            <person name="Wedler H."/>
            <person name="Lauber J."/>
            <person name="Stjepandic D."/>
            <person name="Hoheisel J."/>
            <person name="Straetz M."/>
            <person name="Heim S."/>
            <person name="Kiewitz C."/>
            <person name="Eisen J.A."/>
            <person name="Timmis K.N."/>
            <person name="Duesterhoeft A."/>
            <person name="Tuemmler B."/>
            <person name="Fraser C.M."/>
        </authorList>
    </citation>
    <scope>NUCLEOTIDE SEQUENCE [LARGE SCALE GENOMIC DNA]</scope>
    <source>
        <strain>ATCC 47054 / DSM 6125 / CFBP 8728 / NCIMB 11950 / KT2440</strain>
    </source>
</reference>
<evidence type="ECO:0000255" key="1">
    <source>
        <dbReference type="HAMAP-Rule" id="MF_00276"/>
    </source>
</evidence>
<keyword id="KW-0067">ATP-binding</keyword>
<keyword id="KW-0997">Cell inner membrane</keyword>
<keyword id="KW-1003">Cell membrane</keyword>
<keyword id="KW-0406">Ion transport</keyword>
<keyword id="KW-0472">Membrane</keyword>
<keyword id="KW-0547">Nucleotide-binding</keyword>
<keyword id="KW-0630">Potassium</keyword>
<keyword id="KW-0633">Potassium transport</keyword>
<keyword id="KW-1185">Reference proteome</keyword>
<keyword id="KW-0812">Transmembrane</keyword>
<keyword id="KW-1133">Transmembrane helix</keyword>
<keyword id="KW-0813">Transport</keyword>
<comment type="function">
    <text evidence="1">Part of the high-affinity ATP-driven potassium transport (or Kdp) system, which catalyzes the hydrolysis of ATP coupled with the electrogenic transport of potassium into the cytoplasm. This subunit acts as a catalytic chaperone that increases the ATP-binding affinity of the ATP-hydrolyzing subunit KdpB by the formation of a transient KdpB/KdpC/ATP ternary complex.</text>
</comment>
<comment type="subunit">
    <text evidence="1">The system is composed of three essential subunits: KdpA, KdpB and KdpC.</text>
</comment>
<comment type="subcellular location">
    <subcellularLocation>
        <location evidence="1">Cell inner membrane</location>
        <topology evidence="1">Single-pass membrane protein</topology>
    </subcellularLocation>
</comment>
<comment type="similarity">
    <text evidence="1">Belongs to the KdpC family.</text>
</comment>
<accession>Q88FD8</accession>